<organism>
    <name type="scientific">Aliarcobacter butzleri (strain RM4018)</name>
    <name type="common">Arcobacter butzleri</name>
    <dbReference type="NCBI Taxonomy" id="367737"/>
    <lineage>
        <taxon>Bacteria</taxon>
        <taxon>Pseudomonadati</taxon>
        <taxon>Campylobacterota</taxon>
        <taxon>Epsilonproteobacteria</taxon>
        <taxon>Campylobacterales</taxon>
        <taxon>Arcobacteraceae</taxon>
        <taxon>Aliarcobacter</taxon>
    </lineage>
</organism>
<protein>
    <recommendedName>
        <fullName evidence="1">Phosphoglycerate kinase</fullName>
        <ecNumber evidence="1">2.7.2.3</ecNumber>
    </recommendedName>
</protein>
<keyword id="KW-0067">ATP-binding</keyword>
<keyword id="KW-0963">Cytoplasm</keyword>
<keyword id="KW-0324">Glycolysis</keyword>
<keyword id="KW-0418">Kinase</keyword>
<keyword id="KW-0547">Nucleotide-binding</keyword>
<keyword id="KW-1185">Reference proteome</keyword>
<keyword id="KW-0808">Transferase</keyword>
<sequence length="400" mass="43845">MKLQEIKNIDITGKKVFIRCDFNVPMDEYNNITDDRRIRSALNTIRYCIDHDCSVILSSHFGRPKGGFEEKYSLLPIAKRLHILLKQDIKMAPGVICDETLQMAKELKAGEILLLENMRFEAGETKNDEELSKKLASMAEIYINDAFGVSHRAHASVEGISKYFDIEHKAAGFLMAKEIKFFHHIIHNPKRPFIAIVGGSKVSGKLEALYNLIPKVDKIIIGGGMAFTFLKARGHEIGNSLVEDDLIPEALKIMEEAKSKGVKLYLPVDVVAAEAFDAEAIAKIATIQEMPKGWMGLDIGPASALLFSEALSDANTILWNGPMGVYEMDRFAKGSTKISHAVANSYATTVVGGGDTADLVRVTGDEDDMTFISTGGGASLELIEGKVLPGVKALVIEEND</sequence>
<proteinExistence type="inferred from homology"/>
<reference key="1">
    <citation type="journal article" date="2007" name="PLoS ONE">
        <title>The complete genome sequence and analysis of the Epsilonproteobacterium Arcobacter butzleri.</title>
        <authorList>
            <person name="Miller W.G."/>
            <person name="Parker C.T."/>
            <person name="Rubenfield M."/>
            <person name="Mendz G.L."/>
            <person name="Woesten M.M.S.M."/>
            <person name="Ussery D.W."/>
            <person name="Stolz J.F."/>
            <person name="Binnewies T.T."/>
            <person name="Hallin P.F."/>
            <person name="Wang G."/>
            <person name="Malek J.A."/>
            <person name="Rogosin A."/>
            <person name="Stanker L.H."/>
            <person name="Mandrell R.E."/>
        </authorList>
    </citation>
    <scope>NUCLEOTIDE SEQUENCE [LARGE SCALE GENOMIC DNA]</scope>
    <source>
        <strain>RM4018</strain>
    </source>
</reference>
<gene>
    <name evidence="1" type="primary">pgk</name>
    <name type="ordered locus">Abu_2133</name>
</gene>
<accession>A8EWM4</accession>
<name>PGK_ALIB4</name>
<dbReference type="EC" id="2.7.2.3" evidence="1"/>
<dbReference type="EMBL" id="CP000361">
    <property type="protein sequence ID" value="ABV68347.1"/>
    <property type="molecule type" value="Genomic_DNA"/>
</dbReference>
<dbReference type="RefSeq" id="WP_012147996.1">
    <property type="nucleotide sequence ID" value="NC_009850.1"/>
</dbReference>
<dbReference type="SMR" id="A8EWM4"/>
<dbReference type="STRING" id="367737.Abu_2133"/>
<dbReference type="GeneID" id="24304028"/>
<dbReference type="KEGG" id="abu:Abu_2133"/>
<dbReference type="eggNOG" id="COG0126">
    <property type="taxonomic scope" value="Bacteria"/>
</dbReference>
<dbReference type="HOGENOM" id="CLU_025427_0_2_7"/>
<dbReference type="UniPathway" id="UPA00109">
    <property type="reaction ID" value="UER00185"/>
</dbReference>
<dbReference type="Proteomes" id="UP000001136">
    <property type="component" value="Chromosome"/>
</dbReference>
<dbReference type="GO" id="GO:0005829">
    <property type="term" value="C:cytosol"/>
    <property type="evidence" value="ECO:0007669"/>
    <property type="project" value="TreeGrafter"/>
</dbReference>
<dbReference type="GO" id="GO:0043531">
    <property type="term" value="F:ADP binding"/>
    <property type="evidence" value="ECO:0007669"/>
    <property type="project" value="TreeGrafter"/>
</dbReference>
<dbReference type="GO" id="GO:0005524">
    <property type="term" value="F:ATP binding"/>
    <property type="evidence" value="ECO:0007669"/>
    <property type="project" value="UniProtKB-KW"/>
</dbReference>
<dbReference type="GO" id="GO:0004618">
    <property type="term" value="F:phosphoglycerate kinase activity"/>
    <property type="evidence" value="ECO:0007669"/>
    <property type="project" value="UniProtKB-UniRule"/>
</dbReference>
<dbReference type="GO" id="GO:0006094">
    <property type="term" value="P:gluconeogenesis"/>
    <property type="evidence" value="ECO:0007669"/>
    <property type="project" value="TreeGrafter"/>
</dbReference>
<dbReference type="GO" id="GO:0006096">
    <property type="term" value="P:glycolytic process"/>
    <property type="evidence" value="ECO:0007669"/>
    <property type="project" value="UniProtKB-UniRule"/>
</dbReference>
<dbReference type="FunFam" id="3.40.50.1260:FF:000003">
    <property type="entry name" value="Phosphoglycerate kinase"/>
    <property type="match status" value="1"/>
</dbReference>
<dbReference type="FunFam" id="3.40.50.1260:FF:000006">
    <property type="entry name" value="Phosphoglycerate kinase"/>
    <property type="match status" value="1"/>
</dbReference>
<dbReference type="Gene3D" id="3.40.50.1260">
    <property type="entry name" value="Phosphoglycerate kinase, N-terminal domain"/>
    <property type="match status" value="2"/>
</dbReference>
<dbReference type="HAMAP" id="MF_00145">
    <property type="entry name" value="Phosphoglyc_kinase"/>
    <property type="match status" value="1"/>
</dbReference>
<dbReference type="InterPro" id="IPR001576">
    <property type="entry name" value="Phosphoglycerate_kinase"/>
</dbReference>
<dbReference type="InterPro" id="IPR015911">
    <property type="entry name" value="Phosphoglycerate_kinase_CS"/>
</dbReference>
<dbReference type="InterPro" id="IPR015824">
    <property type="entry name" value="Phosphoglycerate_kinase_N"/>
</dbReference>
<dbReference type="InterPro" id="IPR036043">
    <property type="entry name" value="Phosphoglycerate_kinase_sf"/>
</dbReference>
<dbReference type="PANTHER" id="PTHR11406">
    <property type="entry name" value="PHOSPHOGLYCERATE KINASE"/>
    <property type="match status" value="1"/>
</dbReference>
<dbReference type="PANTHER" id="PTHR11406:SF23">
    <property type="entry name" value="PHOSPHOGLYCERATE KINASE 1, CHLOROPLASTIC-RELATED"/>
    <property type="match status" value="1"/>
</dbReference>
<dbReference type="Pfam" id="PF00162">
    <property type="entry name" value="PGK"/>
    <property type="match status" value="1"/>
</dbReference>
<dbReference type="PIRSF" id="PIRSF000724">
    <property type="entry name" value="Pgk"/>
    <property type="match status" value="1"/>
</dbReference>
<dbReference type="PRINTS" id="PR00477">
    <property type="entry name" value="PHGLYCKINASE"/>
</dbReference>
<dbReference type="SUPFAM" id="SSF53748">
    <property type="entry name" value="Phosphoglycerate kinase"/>
    <property type="match status" value="1"/>
</dbReference>
<dbReference type="PROSITE" id="PS00111">
    <property type="entry name" value="PGLYCERATE_KINASE"/>
    <property type="match status" value="1"/>
</dbReference>
<feature type="chain" id="PRO_1000057960" description="Phosphoglycerate kinase">
    <location>
        <begin position="1"/>
        <end position="400"/>
    </location>
</feature>
<feature type="binding site" evidence="1">
    <location>
        <begin position="21"/>
        <end position="23"/>
    </location>
    <ligand>
        <name>substrate</name>
    </ligand>
</feature>
<feature type="binding site" evidence="1">
    <location>
        <position position="37"/>
    </location>
    <ligand>
        <name>substrate</name>
    </ligand>
</feature>
<feature type="binding site" evidence="1">
    <location>
        <begin position="60"/>
        <end position="63"/>
    </location>
    <ligand>
        <name>substrate</name>
    </ligand>
</feature>
<feature type="binding site" evidence="1">
    <location>
        <position position="119"/>
    </location>
    <ligand>
        <name>substrate</name>
    </ligand>
</feature>
<feature type="binding site" evidence="1">
    <location>
        <position position="152"/>
    </location>
    <ligand>
        <name>substrate</name>
    </ligand>
</feature>
<feature type="binding site" evidence="1">
    <location>
        <position position="205"/>
    </location>
    <ligand>
        <name>ATP</name>
        <dbReference type="ChEBI" id="CHEBI:30616"/>
    </ligand>
</feature>
<feature type="binding site" evidence="1">
    <location>
        <position position="296"/>
    </location>
    <ligand>
        <name>ATP</name>
        <dbReference type="ChEBI" id="CHEBI:30616"/>
    </ligand>
</feature>
<feature type="binding site" evidence="1">
    <location>
        <position position="327"/>
    </location>
    <ligand>
        <name>ATP</name>
        <dbReference type="ChEBI" id="CHEBI:30616"/>
    </ligand>
</feature>
<feature type="binding site" evidence="1">
    <location>
        <begin position="353"/>
        <end position="356"/>
    </location>
    <ligand>
        <name>ATP</name>
        <dbReference type="ChEBI" id="CHEBI:30616"/>
    </ligand>
</feature>
<comment type="catalytic activity">
    <reaction evidence="1">
        <text>(2R)-3-phosphoglycerate + ATP = (2R)-3-phospho-glyceroyl phosphate + ADP</text>
        <dbReference type="Rhea" id="RHEA:14801"/>
        <dbReference type="ChEBI" id="CHEBI:30616"/>
        <dbReference type="ChEBI" id="CHEBI:57604"/>
        <dbReference type="ChEBI" id="CHEBI:58272"/>
        <dbReference type="ChEBI" id="CHEBI:456216"/>
        <dbReference type="EC" id="2.7.2.3"/>
    </reaction>
</comment>
<comment type="pathway">
    <text evidence="1">Carbohydrate degradation; glycolysis; pyruvate from D-glyceraldehyde 3-phosphate: step 2/5.</text>
</comment>
<comment type="subunit">
    <text evidence="1">Monomer.</text>
</comment>
<comment type="subcellular location">
    <subcellularLocation>
        <location evidence="1">Cytoplasm</location>
    </subcellularLocation>
</comment>
<comment type="similarity">
    <text evidence="1">Belongs to the phosphoglycerate kinase family.</text>
</comment>
<evidence type="ECO:0000255" key="1">
    <source>
        <dbReference type="HAMAP-Rule" id="MF_00145"/>
    </source>
</evidence>